<proteinExistence type="inferred from homology"/>
<feature type="chain" id="PRO_0000312128" description="Cytokine-like nuclear factor N-PAC">
    <location>
        <begin position="1"/>
        <end position="559"/>
    </location>
</feature>
<feature type="domain" description="PWWP" evidence="3">
    <location>
        <begin position="9"/>
        <end position="70"/>
    </location>
</feature>
<feature type="region of interest" description="Disordered" evidence="4">
    <location>
        <begin position="106"/>
        <end position="137"/>
    </location>
</feature>
<feature type="region of interest" description="Dehydrogenase domain" evidence="1">
    <location>
        <begin position="267"/>
        <end position="559"/>
    </location>
</feature>
<feature type="compositionally biased region" description="Basic and acidic residues" evidence="4">
    <location>
        <begin position="108"/>
        <end position="125"/>
    </location>
</feature>
<feature type="binding site" evidence="1">
    <location>
        <begin position="277"/>
        <end position="291"/>
    </location>
    <ligand>
        <name>NAD(+)</name>
        <dbReference type="ChEBI" id="CHEBI:57540"/>
    </ligand>
</feature>
<feature type="binding site" evidence="1">
    <location>
        <position position="511"/>
    </location>
    <ligand>
        <name>NAD(+)</name>
        <dbReference type="ChEBI" id="CHEBI:57540"/>
    </ligand>
</feature>
<dbReference type="EMBL" id="CH477401">
    <property type="protein sequence ID" value="EAT41711.1"/>
    <property type="molecule type" value="Genomic_DNA"/>
</dbReference>
<dbReference type="RefSeq" id="XP_001657934.1">
    <property type="nucleotide sequence ID" value="XM_001657884.1"/>
</dbReference>
<dbReference type="SMR" id="Q175F8"/>
<dbReference type="FunCoup" id="Q175F8">
    <property type="interactions" value="2130"/>
</dbReference>
<dbReference type="STRING" id="7159.Q175F8"/>
<dbReference type="PaxDb" id="7159-AAEL006684-PA"/>
<dbReference type="VEuPathDB" id="VectorBase:AAEL006684"/>
<dbReference type="eggNOG" id="KOG0409">
    <property type="taxonomic scope" value="Eukaryota"/>
</dbReference>
<dbReference type="HOGENOM" id="CLU_018075_0_0_1"/>
<dbReference type="InParanoid" id="Q175F8"/>
<dbReference type="OMA" id="TEDAWIK"/>
<dbReference type="PhylomeDB" id="Q175F8"/>
<dbReference type="Proteomes" id="UP000008820">
    <property type="component" value="Unassembled WGS sequence"/>
</dbReference>
<dbReference type="Proteomes" id="UP000682892">
    <property type="component" value="Unassembled WGS sequence"/>
</dbReference>
<dbReference type="GO" id="GO:0000785">
    <property type="term" value="C:chromatin"/>
    <property type="evidence" value="ECO:0007669"/>
    <property type="project" value="TreeGrafter"/>
</dbReference>
<dbReference type="GO" id="GO:0003677">
    <property type="term" value="F:DNA binding"/>
    <property type="evidence" value="ECO:0007669"/>
    <property type="project" value="TreeGrafter"/>
</dbReference>
<dbReference type="GO" id="GO:0051287">
    <property type="term" value="F:NAD binding"/>
    <property type="evidence" value="ECO:0007669"/>
    <property type="project" value="InterPro"/>
</dbReference>
<dbReference type="GO" id="GO:0050661">
    <property type="term" value="F:NADP binding"/>
    <property type="evidence" value="ECO:0007669"/>
    <property type="project" value="InterPro"/>
</dbReference>
<dbReference type="GO" id="GO:0031491">
    <property type="term" value="F:nucleosome binding"/>
    <property type="evidence" value="ECO:0007669"/>
    <property type="project" value="TreeGrafter"/>
</dbReference>
<dbReference type="GO" id="GO:0016491">
    <property type="term" value="F:oxidoreductase activity"/>
    <property type="evidence" value="ECO:0007669"/>
    <property type="project" value="InterPro"/>
</dbReference>
<dbReference type="GO" id="GO:0140673">
    <property type="term" value="P:transcription elongation-coupled chromatin remodeling"/>
    <property type="evidence" value="ECO:0007669"/>
    <property type="project" value="TreeGrafter"/>
</dbReference>
<dbReference type="CDD" id="cd05836">
    <property type="entry name" value="PWWP_GLYR1"/>
    <property type="match status" value="1"/>
</dbReference>
<dbReference type="FunFam" id="3.40.50.720:FF:000058">
    <property type="entry name" value="Putative oxidoreductase GLYR1 homolog"/>
    <property type="match status" value="1"/>
</dbReference>
<dbReference type="Gene3D" id="2.30.30.140">
    <property type="match status" value="1"/>
</dbReference>
<dbReference type="Gene3D" id="1.10.1040.10">
    <property type="entry name" value="N-(1-d-carboxylethyl)-l-norvaline Dehydrogenase, domain 2"/>
    <property type="match status" value="1"/>
</dbReference>
<dbReference type="Gene3D" id="3.40.50.720">
    <property type="entry name" value="NAD(P)-binding Rossmann-like Domain"/>
    <property type="match status" value="1"/>
</dbReference>
<dbReference type="InterPro" id="IPR002204">
    <property type="entry name" value="3-OH-isobutyrate_DH-rel_CS"/>
</dbReference>
<dbReference type="InterPro" id="IPR008927">
    <property type="entry name" value="6-PGluconate_DH-like_C_sf"/>
</dbReference>
<dbReference type="InterPro" id="IPR013328">
    <property type="entry name" value="6PGD_dom2"/>
</dbReference>
<dbReference type="InterPro" id="IPR006115">
    <property type="entry name" value="6PGDH_NADP-bd"/>
</dbReference>
<dbReference type="InterPro" id="IPR035501">
    <property type="entry name" value="GLYR1_PWWP"/>
</dbReference>
<dbReference type="InterPro" id="IPR029154">
    <property type="entry name" value="HIBADH-like_NADP-bd"/>
</dbReference>
<dbReference type="InterPro" id="IPR051265">
    <property type="entry name" value="HIBADH-related_NP60_sf"/>
</dbReference>
<dbReference type="InterPro" id="IPR036291">
    <property type="entry name" value="NAD(P)-bd_dom_sf"/>
</dbReference>
<dbReference type="InterPro" id="IPR000313">
    <property type="entry name" value="PWWP_dom"/>
</dbReference>
<dbReference type="PANTHER" id="PTHR43580:SF2">
    <property type="entry name" value="CYTOKINE-LIKE NUCLEAR FACTOR N-PAC"/>
    <property type="match status" value="1"/>
</dbReference>
<dbReference type="PANTHER" id="PTHR43580">
    <property type="entry name" value="OXIDOREDUCTASE GLYR1-RELATED"/>
    <property type="match status" value="1"/>
</dbReference>
<dbReference type="Pfam" id="PF14833">
    <property type="entry name" value="NAD_binding_11"/>
    <property type="match status" value="1"/>
</dbReference>
<dbReference type="Pfam" id="PF03446">
    <property type="entry name" value="NAD_binding_2"/>
    <property type="match status" value="1"/>
</dbReference>
<dbReference type="Pfam" id="PF00855">
    <property type="entry name" value="PWWP"/>
    <property type="match status" value="1"/>
</dbReference>
<dbReference type="SMART" id="SM00293">
    <property type="entry name" value="PWWP"/>
    <property type="match status" value="1"/>
</dbReference>
<dbReference type="SUPFAM" id="SSF48179">
    <property type="entry name" value="6-phosphogluconate dehydrogenase C-terminal domain-like"/>
    <property type="match status" value="1"/>
</dbReference>
<dbReference type="SUPFAM" id="SSF51735">
    <property type="entry name" value="NAD(P)-binding Rossmann-fold domains"/>
    <property type="match status" value="1"/>
</dbReference>
<dbReference type="SUPFAM" id="SSF63748">
    <property type="entry name" value="Tudor/PWWP/MBT"/>
    <property type="match status" value="1"/>
</dbReference>
<dbReference type="PROSITE" id="PS00895">
    <property type="entry name" value="3_HYDROXYISOBUT_DH"/>
    <property type="match status" value="1"/>
</dbReference>
<dbReference type="PROSITE" id="PS50812">
    <property type="entry name" value="PWWP"/>
    <property type="match status" value="1"/>
</dbReference>
<protein>
    <recommendedName>
        <fullName>Cytokine-like nuclear factor N-PAC</fullName>
        <shortName>NPAC</shortName>
    </recommendedName>
    <alternativeName>
        <fullName>Glyoxylate reductase 1 homolog</fullName>
    </alternativeName>
    <alternativeName>
        <fullName>Nuclear protein NP60 homolog</fullName>
    </alternativeName>
    <alternativeName>
        <fullName>Putative oxidoreductase GLYR1 homolog</fullName>
    </alternativeName>
</protein>
<name>GLYR1_AEDAE</name>
<reference key="1">
    <citation type="journal article" date="2007" name="Science">
        <title>Genome sequence of Aedes aegypti, a major arbovirus vector.</title>
        <authorList>
            <person name="Nene V."/>
            <person name="Wortman J.R."/>
            <person name="Lawson D."/>
            <person name="Haas B.J."/>
            <person name="Kodira C.D."/>
            <person name="Tu Z.J."/>
            <person name="Loftus B.J."/>
            <person name="Xi Z."/>
            <person name="Megy K."/>
            <person name="Grabherr M."/>
            <person name="Ren Q."/>
            <person name="Zdobnov E.M."/>
            <person name="Lobo N.F."/>
            <person name="Campbell K.S."/>
            <person name="Brown S.E."/>
            <person name="Bonaldo M.F."/>
            <person name="Zhu J."/>
            <person name="Sinkins S.P."/>
            <person name="Hogenkamp D.G."/>
            <person name="Amedeo P."/>
            <person name="Arensburger P."/>
            <person name="Atkinson P.W."/>
            <person name="Bidwell S.L."/>
            <person name="Biedler J."/>
            <person name="Birney E."/>
            <person name="Bruggner R.V."/>
            <person name="Costas J."/>
            <person name="Coy M.R."/>
            <person name="Crabtree J."/>
            <person name="Crawford M."/>
            <person name="DeBruyn B."/>
            <person name="DeCaprio D."/>
            <person name="Eiglmeier K."/>
            <person name="Eisenstadt E."/>
            <person name="El-Dorry H."/>
            <person name="Gelbart W.M."/>
            <person name="Gomes S.L."/>
            <person name="Hammond M."/>
            <person name="Hannick L.I."/>
            <person name="Hogan J.R."/>
            <person name="Holmes M.H."/>
            <person name="Jaffe D."/>
            <person name="Johnston S.J."/>
            <person name="Kennedy R.C."/>
            <person name="Koo H."/>
            <person name="Kravitz S."/>
            <person name="Kriventseva E.V."/>
            <person name="Kulp D."/>
            <person name="Labutti K."/>
            <person name="Lee E."/>
            <person name="Li S."/>
            <person name="Lovin D.D."/>
            <person name="Mao C."/>
            <person name="Mauceli E."/>
            <person name="Menck C.F."/>
            <person name="Miller J.R."/>
            <person name="Montgomery P."/>
            <person name="Mori A."/>
            <person name="Nascimento A.L."/>
            <person name="Naveira H.F."/>
            <person name="Nusbaum C."/>
            <person name="O'Leary S.B."/>
            <person name="Orvis J."/>
            <person name="Pertea M."/>
            <person name="Quesneville H."/>
            <person name="Reidenbach K.R."/>
            <person name="Rogers Y.-H.C."/>
            <person name="Roth C.W."/>
            <person name="Schneider J.R."/>
            <person name="Schatz M."/>
            <person name="Shumway M."/>
            <person name="Stanke M."/>
            <person name="Stinson E.O."/>
            <person name="Tubio J.M.C."/>
            <person name="Vanzee J.P."/>
            <person name="Verjovski-Almeida S."/>
            <person name="Werner D."/>
            <person name="White O.R."/>
            <person name="Wyder S."/>
            <person name="Zeng Q."/>
            <person name="Zhao Q."/>
            <person name="Zhao Y."/>
            <person name="Hill C.A."/>
            <person name="Raikhel A.S."/>
            <person name="Soares M.B."/>
            <person name="Knudson D.L."/>
            <person name="Lee N.H."/>
            <person name="Galagan J."/>
            <person name="Salzberg S.L."/>
            <person name="Paulsen I.T."/>
            <person name="Dimopoulos G."/>
            <person name="Collins F.H."/>
            <person name="Bruce B."/>
            <person name="Fraser-Liggett C.M."/>
            <person name="Severson D.W."/>
        </authorList>
    </citation>
    <scope>NUCLEOTIDE SEQUENCE [LARGE SCALE GENOMIC DNA]</scope>
    <source>
        <strain>LVPib12</strain>
    </source>
</reference>
<gene>
    <name type="ORF">AAEL006684</name>
</gene>
<evidence type="ECO:0000250" key="1">
    <source>
        <dbReference type="UniProtKB" id="Q49A26"/>
    </source>
</evidence>
<evidence type="ECO:0000250" key="2">
    <source>
        <dbReference type="UniProtKB" id="Q8T079"/>
    </source>
</evidence>
<evidence type="ECO:0000255" key="3">
    <source>
        <dbReference type="PROSITE-ProRule" id="PRU00162"/>
    </source>
</evidence>
<evidence type="ECO:0000256" key="4">
    <source>
        <dbReference type="SAM" id="MobiDB-lite"/>
    </source>
</evidence>
<evidence type="ECO:0000305" key="5"/>
<sequence>MTDSKGYAVNDLVWAKMKGFSPWPGRISEPPAELRRITVKKNIPVRCIFFFGSNNYAWIEETQIKPYQEFKEKLLSSCKSAGFKEAVQQIEEFIASPENFQHLFASEQDNRPDPDVEFNKLREGGTESGEETTVNNTSTPAALESVETTPVTAKKSAAKKKVRASLPIKLHVDKVVVFRSVAASTTKARAIGNKAKAAAALNDTSSPKRKRKILNDTAGDVSSLDLDTFSPVRRNVPVSHLLNRPTVARPATPEIDMTSVSNALQSRNIQASNLKFGFLGLGIMGCGMVKNLLNSGHSVVVWNRTATKCRKFQEAGAEVADTPSDVIEMTDVTFSCVADPQVAKELVFGNCGVMSANLVGKGYVEMTGVDPETSHDIAEQIIAKGGRYLEAQIQGSKNQAEEGTLIILAAGERLLFEECQTCFEAISRNSFYMGDVGNATKMNLVLQMISGVMLAGIAEGLALADRAGLQQKDVLEVLELTSMSSELVMQKGNAIIKGEFPPQQALKHMQKDLKLALNMAEGLEQPLPITAASNEVYKHAKRLGYGSHDSSAVYVRARF</sequence>
<keyword id="KW-0158">Chromosome</keyword>
<keyword id="KW-1185">Reference proteome</keyword>
<accession>Q175F8</accession>
<organism>
    <name type="scientific">Aedes aegypti</name>
    <name type="common">Yellowfever mosquito</name>
    <name type="synonym">Culex aegypti</name>
    <dbReference type="NCBI Taxonomy" id="7159"/>
    <lineage>
        <taxon>Eukaryota</taxon>
        <taxon>Metazoa</taxon>
        <taxon>Ecdysozoa</taxon>
        <taxon>Arthropoda</taxon>
        <taxon>Hexapoda</taxon>
        <taxon>Insecta</taxon>
        <taxon>Pterygota</taxon>
        <taxon>Neoptera</taxon>
        <taxon>Endopterygota</taxon>
        <taxon>Diptera</taxon>
        <taxon>Nematocera</taxon>
        <taxon>Culicoidea</taxon>
        <taxon>Culicidae</taxon>
        <taxon>Culicinae</taxon>
        <taxon>Aedini</taxon>
        <taxon>Aedes</taxon>
        <taxon>Stegomyia</taxon>
    </lineage>
</organism>
<comment type="function">
    <text evidence="1 2">Nucleosome-destabilizing factor that is recruited to genes during transcriptional activation and colocalizes with a subset of trimethylated 'Lys-36' histone H3 (H3K36me3)-enriched regions.</text>
</comment>
<comment type="subunit">
    <text evidence="2">Binds to mononucleosomes.</text>
</comment>
<comment type="subcellular location">
    <subcellularLocation>
        <location evidence="2">Chromosome</location>
    </subcellularLocation>
</comment>
<comment type="domain">
    <text evidence="1">The PWWP domain is a H3 reader and strongly binds DNA.</text>
</comment>
<comment type="domain">
    <text evidence="1">In the dehydrogenase domain, the conserved NAD(P)H-binding sites and sequence similarity to plant dehydrogenases suggest that this protein may have oxidoreductase activity. However, since the active site is not conserved, the dehydrogenase domain seems to serve as a catalytically inert oligomerization module.</text>
</comment>
<comment type="similarity">
    <text evidence="5">Belongs to the HIBADH-related family. NP60 subfamily.</text>
</comment>